<evidence type="ECO:0000250" key="1"/>
<evidence type="ECO:0000250" key="2">
    <source>
        <dbReference type="UniProtKB" id="Q9NPC4"/>
    </source>
</evidence>
<evidence type="ECO:0000255" key="3"/>
<evidence type="ECO:0000305" key="4"/>
<evidence type="ECO:0000312" key="5">
    <source>
        <dbReference type="EMBL" id="AAR18365.1"/>
    </source>
</evidence>
<gene>
    <name evidence="5" type="primary">A4galt</name>
</gene>
<keyword id="KW-0325">Glycoprotein</keyword>
<keyword id="KW-0328">Glycosyltransferase</keyword>
<keyword id="KW-0333">Golgi apparatus</keyword>
<keyword id="KW-0444">Lipid biosynthesis</keyword>
<keyword id="KW-0443">Lipid metabolism</keyword>
<keyword id="KW-0472">Membrane</keyword>
<keyword id="KW-1185">Reference proteome</keyword>
<keyword id="KW-0735">Signal-anchor</keyword>
<keyword id="KW-0808">Transferase</keyword>
<keyword id="KW-0812">Transmembrane</keyword>
<keyword id="KW-1133">Transmembrane helix</keyword>
<dbReference type="EC" id="2.4.1.228" evidence="2"/>
<dbReference type="EMBL" id="AY371179">
    <property type="protein sequence ID" value="AAR18365.1"/>
    <property type="molecule type" value="mRNA"/>
</dbReference>
<dbReference type="RefSeq" id="NP_001004150.1">
    <property type="nucleotide sequence ID" value="NM_001004150.3"/>
</dbReference>
<dbReference type="RefSeq" id="NP_001164425.1">
    <property type="nucleotide sequence ID" value="NM_001170954.1"/>
</dbReference>
<dbReference type="RefSeq" id="XP_036015295.1">
    <property type="nucleotide sequence ID" value="XM_036159402.1"/>
</dbReference>
<dbReference type="FunCoup" id="Q67BJ4">
    <property type="interactions" value="118"/>
</dbReference>
<dbReference type="STRING" id="10090.ENSMUSP00000057999"/>
<dbReference type="CAZy" id="GT32">
    <property type="family name" value="Glycosyltransferase Family 32"/>
</dbReference>
<dbReference type="GlyCosmos" id="Q67BJ4">
    <property type="glycosylation" value="2 sites, No reported glycans"/>
</dbReference>
<dbReference type="GlyGen" id="Q67BJ4">
    <property type="glycosylation" value="2 sites, 1 N-linked glycan (1 site)"/>
</dbReference>
<dbReference type="iPTMnet" id="Q67BJ4"/>
<dbReference type="PhosphoSitePlus" id="Q67BJ4"/>
<dbReference type="PaxDb" id="10090-ENSMUSP00000129719"/>
<dbReference type="ProteomicsDB" id="296425"/>
<dbReference type="Antibodypedia" id="239">
    <property type="antibodies" value="230 antibodies from 30 providers"/>
</dbReference>
<dbReference type="DNASU" id="239559"/>
<dbReference type="Ensembl" id="ENSMUST00000049530.14">
    <property type="protein sequence ID" value="ENSMUSP00000057999.7"/>
    <property type="gene ID" value="ENSMUSG00000047878.14"/>
</dbReference>
<dbReference type="Ensembl" id="ENSMUST00000164614.3">
    <property type="protein sequence ID" value="ENSMUSP00000129719.2"/>
    <property type="gene ID" value="ENSMUSG00000047878.14"/>
</dbReference>
<dbReference type="GeneID" id="239559"/>
<dbReference type="KEGG" id="mmu:239559"/>
<dbReference type="UCSC" id="uc007xae.2">
    <property type="organism name" value="mouse"/>
</dbReference>
<dbReference type="AGR" id="MGI:3512453"/>
<dbReference type="CTD" id="53947"/>
<dbReference type="MGI" id="MGI:3512453">
    <property type="gene designation" value="A4galt"/>
</dbReference>
<dbReference type="VEuPathDB" id="HostDB:ENSMUSG00000047878"/>
<dbReference type="eggNOG" id="KOG1928">
    <property type="taxonomic scope" value="Eukaryota"/>
</dbReference>
<dbReference type="GeneTree" id="ENSGT00510000047981"/>
<dbReference type="HOGENOM" id="CLU_049512_2_0_1"/>
<dbReference type="InParanoid" id="Q67BJ4"/>
<dbReference type="OMA" id="CKDSYVV"/>
<dbReference type="OrthoDB" id="409543at2759"/>
<dbReference type="PhylomeDB" id="Q67BJ4"/>
<dbReference type="TreeFam" id="TF324053"/>
<dbReference type="Reactome" id="R-MMU-9840309">
    <property type="pathway name" value="Glycosphingolipid biosynthesis"/>
</dbReference>
<dbReference type="BioGRID-ORCS" id="239559">
    <property type="hits" value="3 hits in 79 CRISPR screens"/>
</dbReference>
<dbReference type="ChiTaRS" id="A4galt">
    <property type="organism name" value="mouse"/>
</dbReference>
<dbReference type="PRO" id="PR:Q67BJ4"/>
<dbReference type="Proteomes" id="UP000000589">
    <property type="component" value="Chromosome 15"/>
</dbReference>
<dbReference type="RNAct" id="Q67BJ4">
    <property type="molecule type" value="protein"/>
</dbReference>
<dbReference type="Bgee" id="ENSMUSG00000047878">
    <property type="expression patterns" value="Expressed in ectoplacental cone and 122 other cell types or tissues"/>
</dbReference>
<dbReference type="ExpressionAtlas" id="Q67BJ4">
    <property type="expression patterns" value="baseline and differential"/>
</dbReference>
<dbReference type="GO" id="GO:0000139">
    <property type="term" value="C:Golgi membrane"/>
    <property type="evidence" value="ECO:0007669"/>
    <property type="project" value="UniProtKB-SubCell"/>
</dbReference>
<dbReference type="GO" id="GO:0016020">
    <property type="term" value="C:membrane"/>
    <property type="evidence" value="ECO:0000266"/>
    <property type="project" value="MGI"/>
</dbReference>
<dbReference type="GO" id="GO:0008378">
    <property type="term" value="F:galactosyltransferase activity"/>
    <property type="evidence" value="ECO:0000266"/>
    <property type="project" value="MGI"/>
</dbReference>
<dbReference type="GO" id="GO:0050512">
    <property type="term" value="F:lactosylceramide 4-alpha-galactosyltransferase activity"/>
    <property type="evidence" value="ECO:0000314"/>
    <property type="project" value="MGI"/>
</dbReference>
<dbReference type="GO" id="GO:0015643">
    <property type="term" value="F:toxic substance binding"/>
    <property type="evidence" value="ECO:0000315"/>
    <property type="project" value="MGI"/>
</dbReference>
<dbReference type="GO" id="GO:0001576">
    <property type="term" value="P:globoside biosynthetic process"/>
    <property type="evidence" value="ECO:0000314"/>
    <property type="project" value="MGI"/>
</dbReference>
<dbReference type="GO" id="GO:0007009">
    <property type="term" value="P:plasma membrane organization"/>
    <property type="evidence" value="ECO:0000266"/>
    <property type="project" value="MGI"/>
</dbReference>
<dbReference type="FunFam" id="3.90.550.20:FF:000003">
    <property type="entry name" value="Lactosylceramide 4-alpha-galactosyltransferase"/>
    <property type="match status" value="1"/>
</dbReference>
<dbReference type="Gene3D" id="3.90.550.20">
    <property type="match status" value="1"/>
</dbReference>
<dbReference type="InterPro" id="IPR007652">
    <property type="entry name" value="A1-4-GlycosylTfrase_dom"/>
</dbReference>
<dbReference type="InterPro" id="IPR051981">
    <property type="entry name" value="Glycosyltransf_32"/>
</dbReference>
<dbReference type="InterPro" id="IPR007577">
    <property type="entry name" value="GlycoTrfase_DXD_sugar-bd_CS"/>
</dbReference>
<dbReference type="InterPro" id="IPR029044">
    <property type="entry name" value="Nucleotide-diphossugar_trans"/>
</dbReference>
<dbReference type="PANTHER" id="PTHR12042:SF17">
    <property type="entry name" value="LACTOSYLCERAMIDE 4-ALPHA-GALACTOSYLTRANSFERASE"/>
    <property type="match status" value="1"/>
</dbReference>
<dbReference type="PANTHER" id="PTHR12042">
    <property type="entry name" value="LACTOSYLCERAMIDE 4-ALPHA-GALACTOSYLTRANSFERASE ALPHA- 1,4-GALACTOSYLTRANSFERASE"/>
    <property type="match status" value="1"/>
</dbReference>
<dbReference type="Pfam" id="PF04572">
    <property type="entry name" value="Gb3_synth"/>
    <property type="match status" value="1"/>
</dbReference>
<dbReference type="Pfam" id="PF04488">
    <property type="entry name" value="Gly_transf_sug"/>
    <property type="match status" value="1"/>
</dbReference>
<dbReference type="SUPFAM" id="SSF53448">
    <property type="entry name" value="Nucleotide-diphospho-sugar transferases"/>
    <property type="match status" value="1"/>
</dbReference>
<proteinExistence type="evidence at transcript level"/>
<name>A4GAT_MOUSE</name>
<comment type="function">
    <text evidence="2">Catalyzes the transfer of galactose from UDP-alpha-D-galactose to lactosylceramide/beta-D-galactosyl-(1-&gt;4)-beta-D-glucosyl-(1&lt;-&gt;1)-ceramide(d18:1(4E)) to produce globotriaosylceramide/globoside Gb3Cer (d18:1(4E)). Also able to transfer galactose to galactosylceramide/beta-D-Gal-(1&lt;-&gt;1')-Cer. Globoside Gb3Cer is a glycosphingolipid of the globo serie, one of the major types of neutral root structures of glycosphingolipids, that constitute a significant portion of mammalian cell membranes.</text>
</comment>
<comment type="catalytic activity">
    <reaction evidence="2">
        <text>a beta-D-Gal-(1-&gt;4)-beta-D-Glc-(1&lt;-&gt;1)-Cer(d18:1(4E)) + UDP-alpha-D-galactose = a globoside Gb3Cer (d18:1(4E)) + UDP + H(+)</text>
        <dbReference type="Rhea" id="RHEA:11924"/>
        <dbReference type="ChEBI" id="CHEBI:15378"/>
        <dbReference type="ChEBI" id="CHEBI:17950"/>
        <dbReference type="ChEBI" id="CHEBI:18313"/>
        <dbReference type="ChEBI" id="CHEBI:58223"/>
        <dbReference type="ChEBI" id="CHEBI:66914"/>
        <dbReference type="EC" id="2.4.1.228"/>
    </reaction>
    <physiologicalReaction direction="left-to-right" evidence="2">
        <dbReference type="Rhea" id="RHEA:11925"/>
    </physiologicalReaction>
</comment>
<comment type="catalytic activity">
    <reaction evidence="2">
        <text>a beta-D-Gal-(1&lt;-&gt;1')-ceramide + UDP-alpha-D-galactose = alpha-D-Gal-(1-&gt;4)-beta-D-Gal-(1&lt;-&gt;1')-Cer + UDP + H(+)</text>
        <dbReference type="Rhea" id="RHEA:60044"/>
        <dbReference type="ChEBI" id="CHEBI:15378"/>
        <dbReference type="ChEBI" id="CHEBI:58223"/>
        <dbReference type="ChEBI" id="CHEBI:66914"/>
        <dbReference type="ChEBI" id="CHEBI:143593"/>
        <dbReference type="ChEBI" id="CHEBI:143594"/>
    </reaction>
    <physiologicalReaction direction="left-to-right" evidence="2">
        <dbReference type="Rhea" id="RHEA:60045"/>
    </physiologicalReaction>
</comment>
<comment type="pathway">
    <text evidence="2">Glycolipid biosynthesis.</text>
</comment>
<comment type="subcellular location">
    <subcellularLocation>
        <location evidence="1">Golgi apparatus membrane</location>
        <topology evidence="1">Single-pass type II membrane protein</topology>
    </subcellularLocation>
</comment>
<comment type="domain">
    <text evidence="1">The conserved DXD motif is involved in enzyme activity.</text>
</comment>
<comment type="similarity">
    <text evidence="4">Belongs to the glycosyltransferase 32 family.</text>
</comment>
<comment type="online information" name="Functional Glycomics Gateway - GTase">
    <link uri="http://www.functionalglycomics.org/glycomics/molecule/jsp/glycoEnzyme/viewGlycoEnzyme.jsp?gbpId=gt_mou_453"/>
    <text>a4GalT</text>
</comment>
<protein>
    <recommendedName>
        <fullName>Lactosylceramide 4-alpha-galactosyltransferase</fullName>
        <ecNumber evidence="2">2.4.1.228</ecNumber>
    </recommendedName>
    <alternativeName>
        <fullName>Alpha-1,4-N-acetylglucosaminyltransferase</fullName>
    </alternativeName>
    <alternativeName>
        <fullName>Alpha-1,4-galactosyltransferase</fullName>
    </alternativeName>
    <alternativeName>
        <fullName>Alpha4Gal-T1</fullName>
    </alternativeName>
    <alternativeName>
        <fullName>Globotriaosylceramide synthase</fullName>
        <shortName>Gb3 synthase</shortName>
    </alternativeName>
    <alternativeName>
        <fullName>UDP-galactose:beta-D-galactosyl-beta1-R 4-alpha-D-galactosyltransferase</fullName>
    </alternativeName>
</protein>
<sequence length="359" mass="41366">MGISCSHLEETMSKPPDCLLRMLRGTPRQRVFTFFIISFKFMFLISILIYWHTVGAPKDQREYSLPVDFSCPQLAFPRVSAPGNIFFLETSDRTSPNFLFMCSVESAARAHPESQVVVLMKGLPRDTTAQPRNLGISLLSCFPNVWIRPLDLQELFEDTPLAAWYSEARHRWEPYQLPVLSDASRIALLWKFGGIYLDTDFIVLKNLLNLTNTLGIQSRYVLNGAFLAFERKHEFLALCLHDFVANYNGWIWGHQGPQLLTRVFKKWCSIQSLEKSHACRGVTALPPEAFYPIPWQNWKKYFEDISPEELTQLLNATYAVHVWNKKSQGTHLEATSKALLAQLHARYCPTTHRAMKMYL</sequence>
<accession>Q67BJ4</accession>
<reference evidence="5" key="1">
    <citation type="submission" date="2003-08" db="EMBL/GenBank/DDBJ databases">
        <title>Mouse Gb3 synthase.</title>
        <authorList>
            <person name="Li Y."/>
            <person name="Abe A."/>
            <person name="Hiraoka M."/>
            <person name="Shayman J.A."/>
        </authorList>
    </citation>
    <scope>NUCLEOTIDE SEQUENCE [MRNA]</scope>
</reference>
<organism>
    <name type="scientific">Mus musculus</name>
    <name type="common">Mouse</name>
    <dbReference type="NCBI Taxonomy" id="10090"/>
    <lineage>
        <taxon>Eukaryota</taxon>
        <taxon>Metazoa</taxon>
        <taxon>Chordata</taxon>
        <taxon>Craniata</taxon>
        <taxon>Vertebrata</taxon>
        <taxon>Euteleostomi</taxon>
        <taxon>Mammalia</taxon>
        <taxon>Eutheria</taxon>
        <taxon>Euarchontoglires</taxon>
        <taxon>Glires</taxon>
        <taxon>Rodentia</taxon>
        <taxon>Myomorpha</taxon>
        <taxon>Muroidea</taxon>
        <taxon>Muridae</taxon>
        <taxon>Murinae</taxon>
        <taxon>Mus</taxon>
        <taxon>Mus</taxon>
    </lineage>
</organism>
<feature type="chain" id="PRO_0000080579" description="Lactosylceramide 4-alpha-galactosyltransferase">
    <location>
        <begin position="1"/>
        <end position="359"/>
    </location>
</feature>
<feature type="topological domain" description="Cytoplasmic" evidence="3">
    <location>
        <begin position="1"/>
        <end position="30"/>
    </location>
</feature>
<feature type="transmembrane region" description="Helical; Signal-anchor for type II membrane protein" evidence="3">
    <location>
        <begin position="31"/>
        <end position="51"/>
    </location>
</feature>
<feature type="topological domain" description="Lumenal" evidence="3">
    <location>
        <begin position="52"/>
        <end position="359"/>
    </location>
</feature>
<feature type="short sequence motif" description="DXD motif" evidence="1">
    <location>
        <begin position="198"/>
        <end position="200"/>
    </location>
</feature>
<feature type="glycosylation site" description="N-linked (GlcNAc...) asparagine" evidence="3">
    <location>
        <position position="209"/>
    </location>
</feature>
<feature type="glycosylation site" description="N-linked (GlcNAc...) asparagine" evidence="3">
    <location>
        <position position="315"/>
    </location>
</feature>